<organism>
    <name type="scientific">Human papillomavirus type 5b</name>
    <dbReference type="NCBI Taxonomy" id="10599"/>
    <lineage>
        <taxon>Viruses</taxon>
        <taxon>Monodnaviria</taxon>
        <taxon>Shotokuvirae</taxon>
        <taxon>Cossaviricota</taxon>
        <taxon>Papovaviricetes</taxon>
        <taxon>Zurhausenvirales</taxon>
        <taxon>Papillomaviridae</taxon>
        <taxon>Firstpapillomavirinae</taxon>
        <taxon>Betapapillomavirus</taxon>
        <taxon>Betapapillomavirus 1</taxon>
    </lineage>
</organism>
<protein>
    <recommendedName>
        <fullName>Protein E4</fullName>
    </recommendedName>
</protein>
<evidence type="ECO:0000250" key="1">
    <source>
        <dbReference type="UniProtKB" id="P06922"/>
    </source>
</evidence>
<evidence type="ECO:0000256" key="2">
    <source>
        <dbReference type="SAM" id="MobiDB-lite"/>
    </source>
</evidence>
<evidence type="ECO:0000305" key="3"/>
<name>VE4_HPV5B</name>
<dbReference type="EMBL" id="D90252">
    <property type="protein sequence ID" value="BAA14296.1"/>
    <property type="status" value="ALT_SEQ"/>
    <property type="molecule type" value="Genomic_DNA"/>
</dbReference>
<dbReference type="PIR" id="C40480">
    <property type="entry name" value="W4WLB5"/>
</dbReference>
<dbReference type="SMR" id="P26550"/>
<dbReference type="Proteomes" id="UP000007669">
    <property type="component" value="Genome"/>
</dbReference>
<dbReference type="GO" id="GO:0030430">
    <property type="term" value="C:host cell cytoplasm"/>
    <property type="evidence" value="ECO:0007669"/>
    <property type="project" value="UniProtKB-SubCell"/>
</dbReference>
<dbReference type="GO" id="GO:0042025">
    <property type="term" value="C:host cell nucleus"/>
    <property type="evidence" value="ECO:0007669"/>
    <property type="project" value="UniProtKB-SubCell"/>
</dbReference>
<dbReference type="GO" id="GO:0039592">
    <property type="term" value="P:symbiont-mediated arrest of host cell cycle during G2/M transition"/>
    <property type="evidence" value="ECO:0007669"/>
    <property type="project" value="UniProtKB-KW"/>
</dbReference>
<reference key="1">
    <citation type="journal article" date="1991" name="Virology">
        <title>A subtype of human papillomavirus 5 (HPV-5b) and its subgenomic segment amplified in a carcinoma: nucleotide sequences and genomic organizations.</title>
        <authorList>
            <person name="Yabe Y."/>
            <person name="Sakai A."/>
            <person name="Hitsumoto T."/>
            <person name="Kato H."/>
            <person name="Ogura H."/>
        </authorList>
    </citation>
    <scope>NUCLEOTIDE SEQUENCE [GENOMIC DNA]</scope>
</reference>
<organismHost>
    <name type="scientific">Homo sapiens</name>
    <name type="common">Human</name>
    <dbReference type="NCBI Taxonomy" id="9606"/>
</organismHost>
<keyword id="KW-0244">Early protein</keyword>
<keyword id="KW-1035">Host cytoplasm</keyword>
<keyword id="KW-1079">Host G2/M cell cycle arrest by virus</keyword>
<keyword id="KW-1048">Host nucleus</keyword>
<keyword id="KW-0945">Host-virus interaction</keyword>
<keyword id="KW-1121">Modulation of host cell cycle by virus</keyword>
<keyword id="KW-0597">Phosphoprotein</keyword>
<feature type="chain" id="PRO_0000133258" description="Protein E4">
    <location>
        <begin position="1"/>
        <end position="240"/>
    </location>
</feature>
<feature type="region of interest" description="Disordered" evidence="2">
    <location>
        <begin position="1"/>
        <end position="204"/>
    </location>
</feature>
<feature type="compositionally biased region" description="Pro residues" evidence="2">
    <location>
        <begin position="22"/>
        <end position="37"/>
    </location>
</feature>
<feature type="compositionally biased region" description="Basic and acidic residues" evidence="2">
    <location>
        <begin position="67"/>
        <end position="76"/>
    </location>
</feature>
<feature type="compositionally biased region" description="Pro residues" evidence="2">
    <location>
        <begin position="89"/>
        <end position="104"/>
    </location>
</feature>
<feature type="compositionally biased region" description="Basic and acidic residues" evidence="2">
    <location>
        <begin position="167"/>
        <end position="176"/>
    </location>
</feature>
<sequence length="240" mass="25032">MTDPNSKAPRLQGRQEDKQTQTPPPRPPPPPQPPLTPRPDSSPHQNSHNKPKPEEEGTDGGPPASQGDRKRSKGDQGPDTGPGLGPGRAPSPKPTPLGPPPGPGPRRSARLGPLQADRDPGEGPQVPAEGEVEGHPGGDQGHPPPTPPAPHNGHSGHGPKVQQPEGPEGREGHEEGAVGGDCGDEEGHPPPPPPPTNGHEGGLLSSVASLLVKWEGHFDQLVQSIQDDLEDYWKKLATPQ</sequence>
<gene>
    <name type="primary">E4</name>
</gene>
<comment type="function">
    <text evidence="1">Contributes to multiple aspects of the viral life cycle including viral genome amplification, suppression of suprabasal cell differentiation and egress of newly formed virions. Induces host cell cycle arrest at the G2 phase by associating with and preventing the nuclear entry of host CDK1/cyclin B1 complexes. Inhibits cellular DNA replication by preventing loading of host replication licensing proteins MCM2 and MCM7 onto chromatin. Within the cytoplasm, associates with host kinase SRPK1, a splicing factor regulator, and inhibits its activity. Therefore, E4 favors expression of late viral transcripts by inhibiting SRPK1-mediated phosphorylation of host serine-arginine (SR) proteins that have critical roles in mRNA metabolism. Late in the infectious cycle, E4 also acts to diminish the integrity of the keratinocyte by disrupting the keratin cytoskeleton and inducing apoptosis through alteration of mitochondrial function to facilitate egress of the newly formed virions.</text>
</comment>
<comment type="subunit">
    <text evidence="1">Assembles into oligomeric complexes. Interacts with host CDK1. Interacts with host SRPK1; this interaction may favor expression of late viral transcripts. Interacts with host cytokeratin components KRT8 and KRT18.</text>
</comment>
<comment type="subcellular location">
    <subcellularLocation>
        <location evidence="1">Host cytoplasm</location>
    </subcellularLocation>
    <subcellularLocation>
        <location evidence="1">Host nucleus</location>
    </subcellularLocation>
</comment>
<comment type="PTM">
    <text evidence="1">Phosphorylated by host ERK. The phosphorylation triggers a structural change that enhances keratin binding and protein stability.</text>
</comment>
<comment type="miscellaneous">
    <text evidence="1">The major E4 form is first synthesized as an E1^E4 fusion protein from spliced E1^E4 transcripts, such that the first few amino acids of the E4 protein are derived from the N terminus of E1.</text>
</comment>
<comment type="similarity">
    <text evidence="3">Belongs to the papillomaviridae E4 protein family.</text>
</comment>
<proteinExistence type="inferred from homology"/>
<accession>P26550</accession>